<keyword id="KW-0131">Cell cycle</keyword>
<keyword id="KW-0132">Cell division</keyword>
<keyword id="KW-0963">Cytoplasm</keyword>
<keyword id="KW-0238">DNA-binding</keyword>
<organism>
    <name type="scientific">Marinomonas sp. (strain MWYL1)</name>
    <dbReference type="NCBI Taxonomy" id="400668"/>
    <lineage>
        <taxon>Bacteria</taxon>
        <taxon>Pseudomonadati</taxon>
        <taxon>Pseudomonadota</taxon>
        <taxon>Gammaproteobacteria</taxon>
        <taxon>Oceanospirillales</taxon>
        <taxon>Oceanospirillaceae</taxon>
        <taxon>Marinomonas</taxon>
    </lineage>
</organism>
<comment type="function">
    <text evidence="1">Required for nucleoid occlusion (NO) phenomenon, which prevents Z-ring formation and cell division over the nucleoid. Acts as a DNA-associated cell division inhibitor that binds simultaneously chromosomal DNA and FtsZ, and disrupts the assembly of FtsZ polymers. SlmA-DNA-binding sequences (SBS) are dispersed on non-Ter regions of the chromosome, preventing FtsZ polymerization at these regions.</text>
</comment>
<comment type="subunit">
    <text evidence="1">Homodimer. Interacts with FtsZ.</text>
</comment>
<comment type="subcellular location">
    <subcellularLocation>
        <location evidence="1">Cytoplasm</location>
        <location evidence="1">Nucleoid</location>
    </subcellularLocation>
</comment>
<comment type="similarity">
    <text evidence="1">Belongs to the nucleoid occlusion factor SlmA family.</text>
</comment>
<sequence length="197" mass="22394">MSNKKNDRRTQILQALAQMLESSPGARITTAALAKQVGVSEAALYRHFPSKAKMFEGLIEFIEESLFTRINRIVQEESNVIARIEMIVTLVLGFAEQNPGMCRLLTADALAGETERLRVRITQVFDRIETQLKQVIREADLKQGLRPAMGVAPCANFLIAIIEGKIRHYVRSEFKVKPMEIWPEQWTVLAQNLMLNR</sequence>
<evidence type="ECO:0000255" key="1">
    <source>
        <dbReference type="HAMAP-Rule" id="MF_01839"/>
    </source>
</evidence>
<feature type="chain" id="PRO_0000413761" description="Nucleoid occlusion factor SlmA">
    <location>
        <begin position="1"/>
        <end position="197"/>
    </location>
</feature>
<feature type="domain" description="HTH tetR-type" evidence="1">
    <location>
        <begin position="6"/>
        <end position="66"/>
    </location>
</feature>
<feature type="DNA-binding region" description="H-T-H motif" evidence="1">
    <location>
        <begin position="29"/>
        <end position="48"/>
    </location>
</feature>
<gene>
    <name evidence="1" type="primary">slmA</name>
    <name type="ordered locus">Mmwyl1_0620</name>
</gene>
<proteinExistence type="inferred from homology"/>
<accession>A6VSX5</accession>
<name>SLMA_MARMS</name>
<protein>
    <recommendedName>
        <fullName evidence="1">Nucleoid occlusion factor SlmA</fullName>
    </recommendedName>
</protein>
<dbReference type="EMBL" id="CP000749">
    <property type="protein sequence ID" value="ABR69554.1"/>
    <property type="molecule type" value="Genomic_DNA"/>
</dbReference>
<dbReference type="SMR" id="A6VSX5"/>
<dbReference type="STRING" id="400668.Mmwyl1_0620"/>
<dbReference type="KEGG" id="mmw:Mmwyl1_0620"/>
<dbReference type="eggNOG" id="COG1309">
    <property type="taxonomic scope" value="Bacteria"/>
</dbReference>
<dbReference type="HOGENOM" id="CLU_069356_5_0_6"/>
<dbReference type="OrthoDB" id="9179041at2"/>
<dbReference type="GO" id="GO:0043590">
    <property type="term" value="C:bacterial nucleoid"/>
    <property type="evidence" value="ECO:0007669"/>
    <property type="project" value="UniProtKB-UniRule"/>
</dbReference>
<dbReference type="GO" id="GO:0005737">
    <property type="term" value="C:cytoplasm"/>
    <property type="evidence" value="ECO:0007669"/>
    <property type="project" value="UniProtKB-UniRule"/>
</dbReference>
<dbReference type="GO" id="GO:0043565">
    <property type="term" value="F:sequence-specific DNA binding"/>
    <property type="evidence" value="ECO:0007669"/>
    <property type="project" value="UniProtKB-UniRule"/>
</dbReference>
<dbReference type="GO" id="GO:0051301">
    <property type="term" value="P:cell division"/>
    <property type="evidence" value="ECO:0007669"/>
    <property type="project" value="UniProtKB-KW"/>
</dbReference>
<dbReference type="GO" id="GO:0010974">
    <property type="term" value="P:negative regulation of division septum assembly"/>
    <property type="evidence" value="ECO:0007669"/>
    <property type="project" value="InterPro"/>
</dbReference>
<dbReference type="Gene3D" id="1.10.357.10">
    <property type="entry name" value="Tetracycline Repressor, domain 2"/>
    <property type="match status" value="1"/>
</dbReference>
<dbReference type="HAMAP" id="MF_01839">
    <property type="entry name" value="NO_factor_SlmA"/>
    <property type="match status" value="1"/>
</dbReference>
<dbReference type="InterPro" id="IPR009057">
    <property type="entry name" value="Homeodomain-like_sf"/>
</dbReference>
<dbReference type="InterPro" id="IPR050624">
    <property type="entry name" value="HTH-type_Tx_Regulator"/>
</dbReference>
<dbReference type="InterPro" id="IPR001647">
    <property type="entry name" value="HTH_TetR"/>
</dbReference>
<dbReference type="InterPro" id="IPR023769">
    <property type="entry name" value="NO_SlmA"/>
</dbReference>
<dbReference type="InterPro" id="IPR054580">
    <property type="entry name" value="SlmA-like_C"/>
</dbReference>
<dbReference type="InterPro" id="IPR036271">
    <property type="entry name" value="Tet_transcr_reg_TetR-rel_C_sf"/>
</dbReference>
<dbReference type="NCBIfam" id="NF007015">
    <property type="entry name" value="PRK09480.1"/>
    <property type="match status" value="1"/>
</dbReference>
<dbReference type="PANTHER" id="PTHR43479">
    <property type="entry name" value="ACREF/ENVCD OPERON REPRESSOR-RELATED"/>
    <property type="match status" value="1"/>
</dbReference>
<dbReference type="PANTHER" id="PTHR43479:SF11">
    <property type="entry name" value="ACREF_ENVCD OPERON REPRESSOR-RELATED"/>
    <property type="match status" value="1"/>
</dbReference>
<dbReference type="Pfam" id="PF22276">
    <property type="entry name" value="SlmA-like_C"/>
    <property type="match status" value="1"/>
</dbReference>
<dbReference type="Pfam" id="PF00440">
    <property type="entry name" value="TetR_N"/>
    <property type="match status" value="1"/>
</dbReference>
<dbReference type="SUPFAM" id="SSF46689">
    <property type="entry name" value="Homeodomain-like"/>
    <property type="match status" value="1"/>
</dbReference>
<dbReference type="SUPFAM" id="SSF48498">
    <property type="entry name" value="Tetracyclin repressor-like, C-terminal domain"/>
    <property type="match status" value="1"/>
</dbReference>
<dbReference type="PROSITE" id="PS50977">
    <property type="entry name" value="HTH_TETR_2"/>
    <property type="match status" value="1"/>
</dbReference>
<reference key="1">
    <citation type="submission" date="2007-06" db="EMBL/GenBank/DDBJ databases">
        <title>Complete sequence of Marinomonas sp. MWYL1.</title>
        <authorList>
            <consortium name="US DOE Joint Genome Institute"/>
            <person name="Copeland A."/>
            <person name="Lucas S."/>
            <person name="Lapidus A."/>
            <person name="Barry K."/>
            <person name="Glavina del Rio T."/>
            <person name="Dalin E."/>
            <person name="Tice H."/>
            <person name="Pitluck S."/>
            <person name="Kiss H."/>
            <person name="Brettin T."/>
            <person name="Bruce D."/>
            <person name="Detter J.C."/>
            <person name="Han C."/>
            <person name="Schmutz J."/>
            <person name="Larimer F."/>
            <person name="Land M."/>
            <person name="Hauser L."/>
            <person name="Kyrpides N."/>
            <person name="Kim E."/>
            <person name="Johnston A.W.B."/>
            <person name="Todd J.D."/>
            <person name="Rogers R."/>
            <person name="Wexler M."/>
            <person name="Bond P.L."/>
            <person name="Li Y."/>
            <person name="Richardson P."/>
        </authorList>
    </citation>
    <scope>NUCLEOTIDE SEQUENCE [LARGE SCALE GENOMIC DNA]</scope>
    <source>
        <strain>MWYL1</strain>
    </source>
</reference>